<name>LACD_LISMH</name>
<comment type="catalytic activity">
    <reaction evidence="1">
        <text>D-tagatofuranose 1,6-bisphosphate = D-glyceraldehyde 3-phosphate + dihydroxyacetone phosphate</text>
        <dbReference type="Rhea" id="RHEA:22948"/>
        <dbReference type="ChEBI" id="CHEBI:57642"/>
        <dbReference type="ChEBI" id="CHEBI:58694"/>
        <dbReference type="ChEBI" id="CHEBI:59776"/>
        <dbReference type="EC" id="4.1.2.40"/>
    </reaction>
</comment>
<comment type="pathway">
    <text evidence="1">Carbohydrate metabolism; D-tagatose 6-phosphate degradation; D-glyceraldehyde 3-phosphate and glycerone phosphate from D-tagatose 6-phosphate: step 2/2.</text>
</comment>
<comment type="similarity">
    <text evidence="1">Belongs to the aldolase LacD family.</text>
</comment>
<dbReference type="EC" id="4.1.2.40" evidence="1"/>
<dbReference type="EMBL" id="CP001175">
    <property type="protein sequence ID" value="ACK40431.1"/>
    <property type="molecule type" value="Genomic_DNA"/>
</dbReference>
<dbReference type="RefSeq" id="WP_008946969.1">
    <property type="nucleotide sequence ID" value="NC_011660.1"/>
</dbReference>
<dbReference type="SMR" id="B8DA86"/>
<dbReference type="KEGG" id="lmh:LMHCC_2092"/>
<dbReference type="HOGENOM" id="CLU_058971_0_1_9"/>
<dbReference type="UniPathway" id="UPA00704">
    <property type="reaction ID" value="UER00716"/>
</dbReference>
<dbReference type="GO" id="GO:0061595">
    <property type="term" value="F:6-deoxy-6-sulfofructose-1-phosphate aldolase activity"/>
    <property type="evidence" value="ECO:0007669"/>
    <property type="project" value="TreeGrafter"/>
</dbReference>
<dbReference type="GO" id="GO:0009024">
    <property type="term" value="F:tagatose-6-phosphate kinase activity"/>
    <property type="evidence" value="ECO:0007669"/>
    <property type="project" value="InterPro"/>
</dbReference>
<dbReference type="GO" id="GO:0009025">
    <property type="term" value="F:tagatose-bisphosphate aldolase activity"/>
    <property type="evidence" value="ECO:0007669"/>
    <property type="project" value="UniProtKB-UniRule"/>
</dbReference>
<dbReference type="GO" id="GO:1902777">
    <property type="term" value="P:6-sulfoquinovose(1-) catabolic process"/>
    <property type="evidence" value="ECO:0007669"/>
    <property type="project" value="TreeGrafter"/>
</dbReference>
<dbReference type="GO" id="GO:2001059">
    <property type="term" value="P:D-tagatose 6-phosphate catabolic process"/>
    <property type="evidence" value="ECO:0007669"/>
    <property type="project" value="UniProtKB-UniRule"/>
</dbReference>
<dbReference type="GO" id="GO:0019512">
    <property type="term" value="P:lactose catabolic process via tagatose-6-phosphate"/>
    <property type="evidence" value="ECO:0007669"/>
    <property type="project" value="InterPro"/>
</dbReference>
<dbReference type="FunFam" id="3.20.20.70:FF:000137">
    <property type="entry name" value="Tagatose 1,6-diphosphate aldolase 2"/>
    <property type="match status" value="1"/>
</dbReference>
<dbReference type="Gene3D" id="3.20.20.70">
    <property type="entry name" value="Aldolase class I"/>
    <property type="match status" value="1"/>
</dbReference>
<dbReference type="HAMAP" id="MF_00734">
    <property type="entry name" value="LacD"/>
    <property type="match status" value="1"/>
</dbReference>
<dbReference type="InterPro" id="IPR013785">
    <property type="entry name" value="Aldolase_TIM"/>
</dbReference>
<dbReference type="InterPro" id="IPR002915">
    <property type="entry name" value="DeoC/FbaB/LacD_aldolase"/>
</dbReference>
<dbReference type="InterPro" id="IPR050552">
    <property type="entry name" value="LacD_aldolase"/>
</dbReference>
<dbReference type="InterPro" id="IPR005927">
    <property type="entry name" value="Tag_1.6-dipho_adolase"/>
</dbReference>
<dbReference type="NCBIfam" id="NF009065">
    <property type="entry name" value="PRK12399.1"/>
    <property type="match status" value="1"/>
</dbReference>
<dbReference type="NCBIfam" id="NF009498">
    <property type="entry name" value="PRK12858.1"/>
    <property type="match status" value="1"/>
</dbReference>
<dbReference type="PANTHER" id="PTHR39340">
    <property type="entry name" value="SULFOFRUCTOSEPHOSPHATE ALDOLASE"/>
    <property type="match status" value="1"/>
</dbReference>
<dbReference type="PANTHER" id="PTHR39340:SF1">
    <property type="entry name" value="SULFOFRUCTOSEPHOSPHATE ALDOLASE"/>
    <property type="match status" value="1"/>
</dbReference>
<dbReference type="Pfam" id="PF01791">
    <property type="entry name" value="DeoC"/>
    <property type="match status" value="1"/>
</dbReference>
<dbReference type="SMART" id="SM01133">
    <property type="entry name" value="DeoC"/>
    <property type="match status" value="1"/>
</dbReference>
<dbReference type="SUPFAM" id="SSF51569">
    <property type="entry name" value="Aldolase"/>
    <property type="match status" value="1"/>
</dbReference>
<keyword id="KW-0423">Lactose metabolism</keyword>
<keyword id="KW-0456">Lyase</keyword>
<evidence type="ECO:0000255" key="1">
    <source>
        <dbReference type="HAMAP-Rule" id="MF_00734"/>
    </source>
</evidence>
<reference key="1">
    <citation type="journal article" date="2011" name="J. Bacteriol.">
        <title>Genome sequence of lineage III Listeria monocytogenes strain HCC23.</title>
        <authorList>
            <person name="Steele C.L."/>
            <person name="Donaldson J.R."/>
            <person name="Paul D."/>
            <person name="Banes M.M."/>
            <person name="Arick T."/>
            <person name="Bridges S.M."/>
            <person name="Lawrence M.L."/>
        </authorList>
    </citation>
    <scope>NUCLEOTIDE SEQUENCE [LARGE SCALE GENOMIC DNA]</scope>
    <source>
        <strain>HCC23</strain>
    </source>
</reference>
<proteinExistence type="inferred from homology"/>
<protein>
    <recommendedName>
        <fullName evidence="1">Tagatose 1,6-diphosphate aldolase</fullName>
        <ecNumber evidence="1">4.1.2.40</ecNumber>
    </recommendedName>
    <alternativeName>
        <fullName evidence="1">D-tagatose-1,6-bisphosphate aldolase</fullName>
    </alternativeName>
    <alternativeName>
        <fullName evidence="1">Tagatose-bisphosphate aldolase</fullName>
    </alternativeName>
</protein>
<gene>
    <name evidence="1" type="primary">lacD</name>
    <name type="ordered locus">LMHCC_2092</name>
</gene>
<accession>B8DA86</accession>
<organism>
    <name type="scientific">Listeria monocytogenes serotype 4a (strain HCC23)</name>
    <dbReference type="NCBI Taxonomy" id="552536"/>
    <lineage>
        <taxon>Bacteria</taxon>
        <taxon>Bacillati</taxon>
        <taxon>Bacillota</taxon>
        <taxon>Bacilli</taxon>
        <taxon>Bacillales</taxon>
        <taxon>Listeriaceae</taxon>
        <taxon>Listeria</taxon>
    </lineage>
</organism>
<feature type="chain" id="PRO_1000190770" description="Tagatose 1,6-diphosphate aldolase">
    <location>
        <begin position="1"/>
        <end position="338"/>
    </location>
</feature>
<sequence>MVQITKGKFDGLQRLSNEKGVIAALAIDQRGSLKKMIQQAKGTENKKDVEDFKQLVSEELTPYASAILLDLEYGTPAIKARHEGSGLLTSYEKTGYDATTPGKLPDLIEDLSALRIKENGGDAVKILVYYDPDEPAEINEIKYAFLERIGAECRAVDIPFFLEPITYDAKVTDSGSLEYAKLKPAKVKASIKEFSKPRYGVDVLKLEVPVNFKYVEGFAEGEVAYTQDEAARHFEECSDLSPLPFIYLSAGVTSEMFHKTIQFANQHNVQYSGVLCGRATWADGIEVYGKQGDDALREWLRTQGKENITSLDKLLDEGAVPWWTKYGSFEDVHVVEKQ</sequence>